<protein>
    <recommendedName>
        <fullName evidence="5">Branched-chain amino acid permease BraB</fullName>
        <shortName evidence="4">BCAA permease</shortName>
    </recommendedName>
    <alternativeName>
        <fullName>Branched-chain amino acid transport system carrier protein BraB</fullName>
    </alternativeName>
    <alternativeName>
        <fullName>Branched-chain amino acid uptake carrier BraB</fullName>
    </alternativeName>
</protein>
<reference key="1">
    <citation type="journal article" date="1997" name="Microbiology">
        <title>Sequencing and functional annotation of the Bacillus subtilis genes in the 200 kb rrnB-dnaB region.</title>
        <authorList>
            <person name="Lapidus A."/>
            <person name="Galleron N."/>
            <person name="Sorokin A."/>
            <person name="Ehrlich S.D."/>
        </authorList>
    </citation>
    <scope>NUCLEOTIDE SEQUENCE [GENOMIC DNA]</scope>
    <source>
        <strain>168</strain>
    </source>
</reference>
<reference key="2">
    <citation type="journal article" date="1997" name="Nature">
        <title>The complete genome sequence of the Gram-positive bacterium Bacillus subtilis.</title>
        <authorList>
            <person name="Kunst F."/>
            <person name="Ogasawara N."/>
            <person name="Moszer I."/>
            <person name="Albertini A.M."/>
            <person name="Alloni G."/>
            <person name="Azevedo V."/>
            <person name="Bertero M.G."/>
            <person name="Bessieres P."/>
            <person name="Bolotin A."/>
            <person name="Borchert S."/>
            <person name="Borriss R."/>
            <person name="Boursier L."/>
            <person name="Brans A."/>
            <person name="Braun M."/>
            <person name="Brignell S.C."/>
            <person name="Bron S."/>
            <person name="Brouillet S."/>
            <person name="Bruschi C.V."/>
            <person name="Caldwell B."/>
            <person name="Capuano V."/>
            <person name="Carter N.M."/>
            <person name="Choi S.-K."/>
            <person name="Codani J.-J."/>
            <person name="Connerton I.F."/>
            <person name="Cummings N.J."/>
            <person name="Daniel R.A."/>
            <person name="Denizot F."/>
            <person name="Devine K.M."/>
            <person name="Duesterhoeft A."/>
            <person name="Ehrlich S.D."/>
            <person name="Emmerson P.T."/>
            <person name="Entian K.-D."/>
            <person name="Errington J."/>
            <person name="Fabret C."/>
            <person name="Ferrari E."/>
            <person name="Foulger D."/>
            <person name="Fritz C."/>
            <person name="Fujita M."/>
            <person name="Fujita Y."/>
            <person name="Fuma S."/>
            <person name="Galizzi A."/>
            <person name="Galleron N."/>
            <person name="Ghim S.-Y."/>
            <person name="Glaser P."/>
            <person name="Goffeau A."/>
            <person name="Golightly E.J."/>
            <person name="Grandi G."/>
            <person name="Guiseppi G."/>
            <person name="Guy B.J."/>
            <person name="Haga K."/>
            <person name="Haiech J."/>
            <person name="Harwood C.R."/>
            <person name="Henaut A."/>
            <person name="Hilbert H."/>
            <person name="Holsappel S."/>
            <person name="Hosono S."/>
            <person name="Hullo M.-F."/>
            <person name="Itaya M."/>
            <person name="Jones L.-M."/>
            <person name="Joris B."/>
            <person name="Karamata D."/>
            <person name="Kasahara Y."/>
            <person name="Klaerr-Blanchard M."/>
            <person name="Klein C."/>
            <person name="Kobayashi Y."/>
            <person name="Koetter P."/>
            <person name="Koningstein G."/>
            <person name="Krogh S."/>
            <person name="Kumano M."/>
            <person name="Kurita K."/>
            <person name="Lapidus A."/>
            <person name="Lardinois S."/>
            <person name="Lauber J."/>
            <person name="Lazarevic V."/>
            <person name="Lee S.-M."/>
            <person name="Levine A."/>
            <person name="Liu H."/>
            <person name="Masuda S."/>
            <person name="Mauel C."/>
            <person name="Medigue C."/>
            <person name="Medina N."/>
            <person name="Mellado R.P."/>
            <person name="Mizuno M."/>
            <person name="Moestl D."/>
            <person name="Nakai S."/>
            <person name="Noback M."/>
            <person name="Noone D."/>
            <person name="O'Reilly M."/>
            <person name="Ogawa K."/>
            <person name="Ogiwara A."/>
            <person name="Oudega B."/>
            <person name="Park S.-H."/>
            <person name="Parro V."/>
            <person name="Pohl T.M."/>
            <person name="Portetelle D."/>
            <person name="Porwollik S."/>
            <person name="Prescott A.M."/>
            <person name="Presecan E."/>
            <person name="Pujic P."/>
            <person name="Purnelle B."/>
            <person name="Rapoport G."/>
            <person name="Rey M."/>
            <person name="Reynolds S."/>
            <person name="Rieger M."/>
            <person name="Rivolta C."/>
            <person name="Rocha E."/>
            <person name="Roche B."/>
            <person name="Rose M."/>
            <person name="Sadaie Y."/>
            <person name="Sato T."/>
            <person name="Scanlan E."/>
            <person name="Schleich S."/>
            <person name="Schroeter R."/>
            <person name="Scoffone F."/>
            <person name="Sekiguchi J."/>
            <person name="Sekowska A."/>
            <person name="Seror S.J."/>
            <person name="Serror P."/>
            <person name="Shin B.-S."/>
            <person name="Soldo B."/>
            <person name="Sorokin A."/>
            <person name="Tacconi E."/>
            <person name="Takagi T."/>
            <person name="Takahashi H."/>
            <person name="Takemaru K."/>
            <person name="Takeuchi M."/>
            <person name="Tamakoshi A."/>
            <person name="Tanaka T."/>
            <person name="Terpstra P."/>
            <person name="Tognoni A."/>
            <person name="Tosato V."/>
            <person name="Uchiyama S."/>
            <person name="Vandenbol M."/>
            <person name="Vannier F."/>
            <person name="Vassarotti A."/>
            <person name="Viari A."/>
            <person name="Wambutt R."/>
            <person name="Wedler E."/>
            <person name="Wedler H."/>
            <person name="Weitzenegger T."/>
            <person name="Winters P."/>
            <person name="Wipat A."/>
            <person name="Yamamoto H."/>
            <person name="Yamane K."/>
            <person name="Yasumoto K."/>
            <person name="Yata K."/>
            <person name="Yoshida K."/>
            <person name="Yoshikawa H.-F."/>
            <person name="Zumstein E."/>
            <person name="Yoshikawa H."/>
            <person name="Danchin A."/>
        </authorList>
    </citation>
    <scope>NUCLEOTIDE SEQUENCE [LARGE SCALE GENOMIC DNA]</scope>
    <source>
        <strain>168</strain>
    </source>
</reference>
<reference key="3">
    <citation type="journal article" date="2015" name="J. Bacteriol.">
        <title>Role of branched-chain amino acid transport in Bacillus subtilis CodY activity.</title>
        <authorList>
            <person name="Belitsky B.R."/>
        </authorList>
    </citation>
    <scope>FUNCTION</scope>
    <scope>BIOPHYSICOCHEMICAL PROPERTIES</scope>
    <scope>DISRUPTION PHENOTYPE</scope>
    <source>
        <strain>168 / SMY</strain>
    </source>
</reference>
<reference key="4">
    <citation type="journal article" date="2015" name="PLoS Genet.">
        <title>Intermediate levels of Bacillus subtilis CodY activity are required for derepression of the branched-chain amino acid permease, BraB.</title>
        <authorList>
            <person name="Belitsky B.R."/>
            <person name="Brinsmade S.R."/>
            <person name="Sonenshein A.L."/>
        </authorList>
    </citation>
    <scope>TRANSCRIPTIONAL REGULATION BY CODY AND SCOC</scope>
    <source>
        <strain>168 / SMY</strain>
    </source>
</reference>
<sequence length="445" mass="46609">MKHSLPVKDTIIIGFMLFALFFGAGNMIYPPELGQAAGHNVWKAIGGFLLTGVGLPLLGIIAIALTGKDAKGLADKAHPVFGTIFTVVLYLSIGPLFAIPRTGTVSYEIGAVPFLTGVPERLSLLIFTLIFFGVTYYLALNPSKVVDRVGKILTPIKFTIILIIVLKAIFTPMGGLGAVTEAYKGTPVFKGFLEGYKTMDALASIVFGVVVVNAVKSKGVTQSKALAAACIKAGVIAALGLTFIYVSLAYLGATSTNAIGPVGEGAKILSASSHYLFGSLGNIVLGAAITVACLTTSIGLVTSCGQYFSKLIPALSYKIVVTIVTLFSLIIANFGLAQIIAFSVPILSAIYPLAIVIIVLSFIDKIFKERREVYIACLIGTGLFSILDGIKAAGFSLGSLDVFLNANLPLYSLGIGWVLPGIVGAVIGYVLTLFIGPSKQLNEIS</sequence>
<dbReference type="EMBL" id="AF008220">
    <property type="protein sequence ID" value="AAC00400.1"/>
    <property type="molecule type" value="Genomic_DNA"/>
</dbReference>
<dbReference type="EMBL" id="AL009126">
    <property type="protein sequence ID" value="CAB14938.1"/>
    <property type="molecule type" value="Genomic_DNA"/>
</dbReference>
<dbReference type="PIR" id="C69596">
    <property type="entry name" value="C69596"/>
</dbReference>
<dbReference type="RefSeq" id="NP_390838.1">
    <property type="nucleotide sequence ID" value="NC_000964.3"/>
</dbReference>
<dbReference type="FunCoup" id="O34545">
    <property type="interactions" value="170"/>
</dbReference>
<dbReference type="STRING" id="224308.BSU29600"/>
<dbReference type="PaxDb" id="224308-BSU29600"/>
<dbReference type="EnsemblBacteria" id="CAB14938">
    <property type="protein sequence ID" value="CAB14938"/>
    <property type="gene ID" value="BSU_29600"/>
</dbReference>
<dbReference type="GeneID" id="937334"/>
<dbReference type="KEGG" id="bsu:BSU29600"/>
<dbReference type="PATRIC" id="fig|224308.179.peg.3216"/>
<dbReference type="eggNOG" id="COG1114">
    <property type="taxonomic scope" value="Bacteria"/>
</dbReference>
<dbReference type="InParanoid" id="O34545"/>
<dbReference type="OrthoDB" id="9783920at2"/>
<dbReference type="PhylomeDB" id="O34545"/>
<dbReference type="BioCyc" id="BSUB:BSU29600-MONOMER"/>
<dbReference type="Proteomes" id="UP000001570">
    <property type="component" value="Chromosome"/>
</dbReference>
<dbReference type="GO" id="GO:0005886">
    <property type="term" value="C:plasma membrane"/>
    <property type="evidence" value="ECO:0000318"/>
    <property type="project" value="GO_Central"/>
</dbReference>
<dbReference type="GO" id="GO:0015188">
    <property type="term" value="F:L-isoleucine transmembrane transporter activity"/>
    <property type="evidence" value="ECO:0000318"/>
    <property type="project" value="GO_Central"/>
</dbReference>
<dbReference type="GO" id="GO:0015190">
    <property type="term" value="F:L-leucine transmembrane transporter activity"/>
    <property type="evidence" value="ECO:0000318"/>
    <property type="project" value="GO_Central"/>
</dbReference>
<dbReference type="GO" id="GO:0005304">
    <property type="term" value="F:L-valine transmembrane transporter activity"/>
    <property type="evidence" value="ECO:0000318"/>
    <property type="project" value="GO_Central"/>
</dbReference>
<dbReference type="GO" id="GO:0015818">
    <property type="term" value="P:isoleucine transport"/>
    <property type="evidence" value="ECO:0000318"/>
    <property type="project" value="GO_Central"/>
</dbReference>
<dbReference type="GO" id="GO:0015820">
    <property type="term" value="P:L-leucine transport"/>
    <property type="evidence" value="ECO:0000318"/>
    <property type="project" value="GO_Central"/>
</dbReference>
<dbReference type="GO" id="GO:0015829">
    <property type="term" value="P:valine transport"/>
    <property type="evidence" value="ECO:0000318"/>
    <property type="project" value="GO_Central"/>
</dbReference>
<dbReference type="InterPro" id="IPR004685">
    <property type="entry name" value="Brnchd-chn_aa_trnsp_Livcs"/>
</dbReference>
<dbReference type="NCBIfam" id="TIGR00796">
    <property type="entry name" value="livcs"/>
    <property type="match status" value="1"/>
</dbReference>
<dbReference type="PANTHER" id="PTHR30588:SF8">
    <property type="entry name" value="BRANCHED-CHAIN AMINO ACID PERMEASE BRAB"/>
    <property type="match status" value="1"/>
</dbReference>
<dbReference type="PANTHER" id="PTHR30588">
    <property type="entry name" value="BRANCHED-CHAIN AMINO ACID TRANSPORT SYSTEM 2 CARRIER PROTEIN"/>
    <property type="match status" value="1"/>
</dbReference>
<dbReference type="Pfam" id="PF05525">
    <property type="entry name" value="Branch_AA_trans"/>
    <property type="match status" value="1"/>
</dbReference>
<gene>
    <name evidence="4" type="primary">braB</name>
    <name type="ordered locus">BSU29600</name>
</gene>
<keyword id="KW-0029">Amino-acid transport</keyword>
<keyword id="KW-1003">Cell membrane</keyword>
<keyword id="KW-0472">Membrane</keyword>
<keyword id="KW-1185">Reference proteome</keyword>
<keyword id="KW-0812">Transmembrane</keyword>
<keyword id="KW-1133">Transmembrane helix</keyword>
<keyword id="KW-0813">Transport</keyword>
<proteinExistence type="evidence at protein level"/>
<comment type="function">
    <text evidence="2">Branched-chain amino acid transport system which is involved in the uptake of isoleucine, valine and probably leucine (PubMed:25645558). Together with BcaP and BrnQ, plays an important role in the activation of CodY, a branched-chain amino acid-responsive transcriptional regulator that controls the expression of several dozen transcription units in B.subtilis (PubMed:25645558).</text>
</comment>
<comment type="biophysicochemical properties">
    <kinetics>
        <KM evidence="2">16 uM for isoleucine</KM>
        <Vmax evidence="2">25.0 nmol/min/mg enzyme with isoleucine as substrate</Vmax>
    </kinetics>
</comment>
<comment type="subcellular location">
    <subcellularLocation>
        <location evidence="6">Cell membrane</location>
        <topology evidence="1">Multi-pass membrane protein</topology>
    </subcellularLocation>
</comment>
<comment type="induction">
    <text evidence="3">Expression is under both negative and positive control by the transcriptional regulator CodY (PubMed:26473603). The negative control is direct and the positive control is indirect and mediated by another transcriptional regulator, ScoC (or Hpr), which, in turn, is repressed by CodY (PubMed:26473603). Thus, CodY and ScoC form a feed-forward regulatory loop in which CodY acts an indirect positive regulator of braB (PubMed:26473603). This feed-forward regulatory loop at the braB promoter is an arrangement in which two regulatory proteins repress the same target gene and one of the regulators represses expression of the other (PubMed:26473603).</text>
</comment>
<comment type="disruption phenotype">
    <text evidence="2">Mutant is still able to take up isoleucine, leucine and valine.</text>
</comment>
<comment type="similarity">
    <text evidence="6">Belongs to the branched chain amino acid transporter family.</text>
</comment>
<feature type="chain" id="PRO_0000099770" description="Branched-chain amino acid permease BraB">
    <location>
        <begin position="1"/>
        <end position="445"/>
    </location>
</feature>
<feature type="transmembrane region" description="Helical" evidence="1">
    <location>
        <begin position="11"/>
        <end position="31"/>
    </location>
</feature>
<feature type="transmembrane region" description="Helical" evidence="1">
    <location>
        <begin position="45"/>
        <end position="65"/>
    </location>
</feature>
<feature type="transmembrane region" description="Helical" evidence="1">
    <location>
        <begin position="79"/>
        <end position="99"/>
    </location>
</feature>
<feature type="transmembrane region" description="Helical" evidence="1">
    <location>
        <begin position="122"/>
        <end position="142"/>
    </location>
</feature>
<feature type="transmembrane region" description="Helical" evidence="1">
    <location>
        <begin position="158"/>
        <end position="178"/>
    </location>
</feature>
<feature type="transmembrane region" description="Helical" evidence="1">
    <location>
        <begin position="192"/>
        <end position="212"/>
    </location>
</feature>
<feature type="transmembrane region" description="Helical" evidence="1">
    <location>
        <begin position="233"/>
        <end position="253"/>
    </location>
</feature>
<feature type="transmembrane region" description="Helical" evidence="1">
    <location>
        <begin position="275"/>
        <end position="295"/>
    </location>
</feature>
<feature type="transmembrane region" description="Helical" evidence="1">
    <location>
        <begin position="311"/>
        <end position="331"/>
    </location>
</feature>
<feature type="transmembrane region" description="Helical" evidence="1">
    <location>
        <begin position="339"/>
        <end position="359"/>
    </location>
</feature>
<feature type="transmembrane region" description="Helical" evidence="1">
    <location>
        <begin position="375"/>
        <end position="395"/>
    </location>
</feature>
<feature type="transmembrane region" description="Helical" evidence="1">
    <location>
        <begin position="415"/>
        <end position="435"/>
    </location>
</feature>
<accession>O34545</accession>
<name>BRAB_BACSU</name>
<organism>
    <name type="scientific">Bacillus subtilis (strain 168)</name>
    <dbReference type="NCBI Taxonomy" id="224308"/>
    <lineage>
        <taxon>Bacteria</taxon>
        <taxon>Bacillati</taxon>
        <taxon>Bacillota</taxon>
        <taxon>Bacilli</taxon>
        <taxon>Bacillales</taxon>
        <taxon>Bacillaceae</taxon>
        <taxon>Bacillus</taxon>
    </lineage>
</organism>
<evidence type="ECO:0000255" key="1"/>
<evidence type="ECO:0000269" key="2">
    <source>
    </source>
</evidence>
<evidence type="ECO:0000269" key="3">
    <source>
    </source>
</evidence>
<evidence type="ECO:0000303" key="4">
    <source>
    </source>
</evidence>
<evidence type="ECO:0000303" key="5">
    <source>
    </source>
</evidence>
<evidence type="ECO:0000305" key="6"/>